<keyword id="KW-0963">Cytoplasm</keyword>
<keyword id="KW-0378">Hydrolase</keyword>
<keyword id="KW-0539">Nucleus</keyword>
<keyword id="KW-0597">Phosphoprotein</keyword>
<keyword id="KW-0904">Protein phosphatase</keyword>
<keyword id="KW-1185">Reference proteome</keyword>
<reference key="1">
    <citation type="journal article" date="1996" name="Blood">
        <title>A novel protein tyrosine phosphatase expressed in lin(lo)CD34(hi)Sca(hi) hematopoietic progenitor cells.</title>
        <authorList>
            <person name="Cheng J."/>
            <person name="Daimaru L."/>
            <person name="Fennie C."/>
            <person name="Lasky L.A."/>
        </authorList>
    </citation>
    <scope>NUCLEOTIDE SEQUENCE [MRNA]</scope>
    <scope>TISSUE SPECIFICITY</scope>
    <source>
        <tissue>Embryo</tissue>
    </source>
</reference>
<reference key="2">
    <citation type="journal article" date="1996" name="Oncogene">
        <title>Cloning and characterization of PTP-K1, a novel nonreceptor protein tyrosine phosphatase highly expressed in bone marrow.</title>
        <authorList>
            <person name="Huang K."/>
            <person name="Sommers C.L."/>
            <person name="Grinberg A."/>
            <person name="Kozak C.A."/>
            <person name="Love P.E."/>
        </authorList>
    </citation>
    <scope>NUCLEOTIDE SEQUENCE [MRNA]</scope>
    <scope>TISSUE SPECIFICITY</scope>
    <source>
        <tissue>Kidney</tissue>
    </source>
</reference>
<reference key="3">
    <citation type="journal article" date="1996" name="Blood">
        <title>Cloning and characterization of fetal liver phosphatase 1, a nuclear protein tyrosine phosphatase isolated from hematopoietic stem cells.</title>
        <authorList>
            <person name="Dosil M."/>
            <person name="Leibman N."/>
            <person name="Lemischka I.R."/>
        </authorList>
    </citation>
    <scope>NUCLEOTIDE SEQUENCE [MRNA]</scope>
    <scope>SUBCELLULAR LOCATION</scope>
    <scope>TISSUE SPECIFICITY</scope>
    <source>
        <strain>C57BL/6J</strain>
        <tissue>Fetal liver</tissue>
    </source>
</reference>
<reference key="4">
    <citation type="journal article" date="2005" name="Science">
        <title>The transcriptional landscape of the mammalian genome.</title>
        <authorList>
            <person name="Carninci P."/>
            <person name="Kasukawa T."/>
            <person name="Katayama S."/>
            <person name="Gough J."/>
            <person name="Frith M.C."/>
            <person name="Maeda N."/>
            <person name="Oyama R."/>
            <person name="Ravasi T."/>
            <person name="Lenhard B."/>
            <person name="Wells C."/>
            <person name="Kodzius R."/>
            <person name="Shimokawa K."/>
            <person name="Bajic V.B."/>
            <person name="Brenner S.E."/>
            <person name="Batalov S."/>
            <person name="Forrest A.R."/>
            <person name="Zavolan M."/>
            <person name="Davis M.J."/>
            <person name="Wilming L.G."/>
            <person name="Aidinis V."/>
            <person name="Allen J.E."/>
            <person name="Ambesi-Impiombato A."/>
            <person name="Apweiler R."/>
            <person name="Aturaliya R.N."/>
            <person name="Bailey T.L."/>
            <person name="Bansal M."/>
            <person name="Baxter L."/>
            <person name="Beisel K.W."/>
            <person name="Bersano T."/>
            <person name="Bono H."/>
            <person name="Chalk A.M."/>
            <person name="Chiu K.P."/>
            <person name="Choudhary V."/>
            <person name="Christoffels A."/>
            <person name="Clutterbuck D.R."/>
            <person name="Crowe M.L."/>
            <person name="Dalla E."/>
            <person name="Dalrymple B.P."/>
            <person name="de Bono B."/>
            <person name="Della Gatta G."/>
            <person name="di Bernardo D."/>
            <person name="Down T."/>
            <person name="Engstrom P."/>
            <person name="Fagiolini M."/>
            <person name="Faulkner G."/>
            <person name="Fletcher C.F."/>
            <person name="Fukushima T."/>
            <person name="Furuno M."/>
            <person name="Futaki S."/>
            <person name="Gariboldi M."/>
            <person name="Georgii-Hemming P."/>
            <person name="Gingeras T.R."/>
            <person name="Gojobori T."/>
            <person name="Green R.E."/>
            <person name="Gustincich S."/>
            <person name="Harbers M."/>
            <person name="Hayashi Y."/>
            <person name="Hensch T.K."/>
            <person name="Hirokawa N."/>
            <person name="Hill D."/>
            <person name="Huminiecki L."/>
            <person name="Iacono M."/>
            <person name="Ikeo K."/>
            <person name="Iwama A."/>
            <person name="Ishikawa T."/>
            <person name="Jakt M."/>
            <person name="Kanapin A."/>
            <person name="Katoh M."/>
            <person name="Kawasawa Y."/>
            <person name="Kelso J."/>
            <person name="Kitamura H."/>
            <person name="Kitano H."/>
            <person name="Kollias G."/>
            <person name="Krishnan S.P."/>
            <person name="Kruger A."/>
            <person name="Kummerfeld S.K."/>
            <person name="Kurochkin I.V."/>
            <person name="Lareau L.F."/>
            <person name="Lazarevic D."/>
            <person name="Lipovich L."/>
            <person name="Liu J."/>
            <person name="Liuni S."/>
            <person name="McWilliam S."/>
            <person name="Madan Babu M."/>
            <person name="Madera M."/>
            <person name="Marchionni L."/>
            <person name="Matsuda H."/>
            <person name="Matsuzawa S."/>
            <person name="Miki H."/>
            <person name="Mignone F."/>
            <person name="Miyake S."/>
            <person name="Morris K."/>
            <person name="Mottagui-Tabar S."/>
            <person name="Mulder N."/>
            <person name="Nakano N."/>
            <person name="Nakauchi H."/>
            <person name="Ng P."/>
            <person name="Nilsson R."/>
            <person name="Nishiguchi S."/>
            <person name="Nishikawa S."/>
            <person name="Nori F."/>
            <person name="Ohara O."/>
            <person name="Okazaki Y."/>
            <person name="Orlando V."/>
            <person name="Pang K.C."/>
            <person name="Pavan W.J."/>
            <person name="Pavesi G."/>
            <person name="Pesole G."/>
            <person name="Petrovsky N."/>
            <person name="Piazza S."/>
            <person name="Reed J."/>
            <person name="Reid J.F."/>
            <person name="Ring B.Z."/>
            <person name="Ringwald M."/>
            <person name="Rost B."/>
            <person name="Ruan Y."/>
            <person name="Salzberg S.L."/>
            <person name="Sandelin A."/>
            <person name="Schneider C."/>
            <person name="Schoenbach C."/>
            <person name="Sekiguchi K."/>
            <person name="Semple C.A."/>
            <person name="Seno S."/>
            <person name="Sessa L."/>
            <person name="Sheng Y."/>
            <person name="Shibata Y."/>
            <person name="Shimada H."/>
            <person name="Shimada K."/>
            <person name="Silva D."/>
            <person name="Sinclair B."/>
            <person name="Sperling S."/>
            <person name="Stupka E."/>
            <person name="Sugiura K."/>
            <person name="Sultana R."/>
            <person name="Takenaka Y."/>
            <person name="Taki K."/>
            <person name="Tammoja K."/>
            <person name="Tan S.L."/>
            <person name="Tang S."/>
            <person name="Taylor M.S."/>
            <person name="Tegner J."/>
            <person name="Teichmann S.A."/>
            <person name="Ueda H.R."/>
            <person name="van Nimwegen E."/>
            <person name="Verardo R."/>
            <person name="Wei C.L."/>
            <person name="Yagi K."/>
            <person name="Yamanishi H."/>
            <person name="Zabarovsky E."/>
            <person name="Zhu S."/>
            <person name="Zimmer A."/>
            <person name="Hide W."/>
            <person name="Bult C."/>
            <person name="Grimmond S.M."/>
            <person name="Teasdale R.D."/>
            <person name="Liu E.T."/>
            <person name="Brusic V."/>
            <person name="Quackenbush J."/>
            <person name="Wahlestedt C."/>
            <person name="Mattick J.S."/>
            <person name="Hume D.A."/>
            <person name="Kai C."/>
            <person name="Sasaki D."/>
            <person name="Tomaru Y."/>
            <person name="Fukuda S."/>
            <person name="Kanamori-Katayama M."/>
            <person name="Suzuki M."/>
            <person name="Aoki J."/>
            <person name="Arakawa T."/>
            <person name="Iida J."/>
            <person name="Imamura K."/>
            <person name="Itoh M."/>
            <person name="Kato T."/>
            <person name="Kawaji H."/>
            <person name="Kawagashira N."/>
            <person name="Kawashima T."/>
            <person name="Kojima M."/>
            <person name="Kondo S."/>
            <person name="Konno H."/>
            <person name="Nakano K."/>
            <person name="Ninomiya N."/>
            <person name="Nishio T."/>
            <person name="Okada M."/>
            <person name="Plessy C."/>
            <person name="Shibata K."/>
            <person name="Shiraki T."/>
            <person name="Suzuki S."/>
            <person name="Tagami M."/>
            <person name="Waki K."/>
            <person name="Watahiki A."/>
            <person name="Okamura-Oho Y."/>
            <person name="Suzuki H."/>
            <person name="Kawai J."/>
            <person name="Hayashizaki Y."/>
        </authorList>
    </citation>
    <scope>NUCLEOTIDE SEQUENCE [LARGE SCALE MRNA]</scope>
    <source>
        <strain>C57BL/6J</strain>
        <tissue>Intestinal mucosa</tissue>
    </source>
</reference>
<reference key="5">
    <citation type="journal article" date="2004" name="Genome Res.">
        <title>The status, quality, and expansion of the NIH full-length cDNA project: the Mammalian Gene Collection (MGC).</title>
        <authorList>
            <consortium name="The MGC Project Team"/>
        </authorList>
    </citation>
    <scope>NUCLEOTIDE SEQUENCE [LARGE SCALE MRNA]</scope>
    <source>
        <strain>Czech II</strain>
        <tissue>Mammary tumor</tissue>
    </source>
</reference>
<reference key="6">
    <citation type="journal article" date="1997" name="J. Cell Biol.">
        <title>PSTPIP: a tyrosine phosphorylated cleavage furrow-associated protein that is a substrate for a PEST tyrosine phosphatase.</title>
        <authorList>
            <person name="Spencer S."/>
            <person name="Dowbenko D."/>
            <person name="Cheng J."/>
            <person name="Li W."/>
            <person name="Brush J."/>
            <person name="Utzig S."/>
            <person name="Simanis V."/>
            <person name="Lasky L.A."/>
        </authorList>
    </citation>
    <scope>INTERACTION WITH PSTPIP1</scope>
</reference>
<reference key="7">
    <citation type="journal article" date="2007" name="J. Immunol.">
        <title>Quantitative time-resolved phosphoproteomic analysis of mast cell signaling.</title>
        <authorList>
            <person name="Cao L."/>
            <person name="Yu K."/>
            <person name="Banh C."/>
            <person name="Nguyen V."/>
            <person name="Ritz A."/>
            <person name="Raphael B.J."/>
            <person name="Kawakami Y."/>
            <person name="Kawakami T."/>
            <person name="Salomon A.R."/>
        </authorList>
    </citation>
    <scope>PHOSPHORYLATION [LARGE SCALE ANALYSIS] AT TYR-381 AND TYR-419</scope>
    <scope>IDENTIFICATION BY MASS SPECTROMETRY [LARGE SCALE ANALYSIS]</scope>
    <source>
        <tissue>Mast cell</tissue>
    </source>
</reference>
<reference key="8">
    <citation type="journal article" date="2009" name="Immunity">
        <title>The phagosomal proteome in interferon-gamma-activated macrophages.</title>
        <authorList>
            <person name="Trost M."/>
            <person name="English L."/>
            <person name="Lemieux S."/>
            <person name="Courcelles M."/>
            <person name="Desjardins M."/>
            <person name="Thibault P."/>
        </authorList>
    </citation>
    <scope>PHOSPHORYLATION [LARGE SCALE ANALYSIS] AT TYR-381</scope>
    <scope>IDENTIFICATION BY MASS SPECTROMETRY [LARGE SCALE ANALYSIS]</scope>
</reference>
<reference key="9">
    <citation type="journal article" date="2010" name="Cell">
        <title>A tissue-specific atlas of mouse protein phosphorylation and expression.</title>
        <authorList>
            <person name="Huttlin E.L."/>
            <person name="Jedrychowski M.P."/>
            <person name="Elias J.E."/>
            <person name="Goswami T."/>
            <person name="Rad R."/>
            <person name="Beausoleil S.A."/>
            <person name="Villen J."/>
            <person name="Haas W."/>
            <person name="Sowa M.E."/>
            <person name="Gygi S.P."/>
        </authorList>
    </citation>
    <scope>IDENTIFICATION BY MASS SPECTROMETRY [LARGE SCALE ANALYSIS]</scope>
    <source>
        <tissue>Spleen</tissue>
    </source>
</reference>
<proteinExistence type="evidence at protein level"/>
<gene>
    <name type="primary">Ptpn18</name>
    <name type="synonym">Flp1</name>
    <name type="synonym">Ptpk1</name>
</gene>
<dbReference type="EC" id="3.1.3.48"/>
<dbReference type="EMBL" id="U49853">
    <property type="protein sequence ID" value="AAB18623.1"/>
    <property type="molecule type" value="mRNA"/>
</dbReference>
<dbReference type="EMBL" id="U35124">
    <property type="protein sequence ID" value="AAB82736.1"/>
    <property type="molecule type" value="mRNA"/>
</dbReference>
<dbReference type="EMBL" id="U52523">
    <property type="protein sequence ID" value="AAC52991.1"/>
    <property type="molecule type" value="mRNA"/>
</dbReference>
<dbReference type="EMBL" id="AK144353">
    <property type="protein sequence ID" value="BAE25845.1"/>
    <property type="molecule type" value="mRNA"/>
</dbReference>
<dbReference type="EMBL" id="BC008512">
    <property type="protein sequence ID" value="AAH08512.1"/>
    <property type="molecule type" value="mRNA"/>
</dbReference>
<dbReference type="CCDS" id="CCDS14867.1"/>
<dbReference type="RefSeq" id="NP_035336.2">
    <property type="nucleotide sequence ID" value="NM_011206.2"/>
</dbReference>
<dbReference type="SMR" id="Q61152"/>
<dbReference type="BioGRID" id="202483">
    <property type="interactions" value="2"/>
</dbReference>
<dbReference type="FunCoup" id="Q61152">
    <property type="interactions" value="1593"/>
</dbReference>
<dbReference type="IntAct" id="Q61152">
    <property type="interactions" value="2"/>
</dbReference>
<dbReference type="MINT" id="Q61152"/>
<dbReference type="STRING" id="10090.ENSMUSP00000027302"/>
<dbReference type="iPTMnet" id="Q61152"/>
<dbReference type="PhosphoSitePlus" id="Q61152"/>
<dbReference type="jPOST" id="Q61152"/>
<dbReference type="PaxDb" id="10090-ENSMUSP00000027302"/>
<dbReference type="PeptideAtlas" id="Q61152"/>
<dbReference type="ProteomicsDB" id="291541"/>
<dbReference type="Antibodypedia" id="33499">
    <property type="antibodies" value="118 antibodies from 24 providers"/>
</dbReference>
<dbReference type="DNASU" id="19253"/>
<dbReference type="Ensembl" id="ENSMUST00000027302.14">
    <property type="protein sequence ID" value="ENSMUSP00000027302.8"/>
    <property type="gene ID" value="ENSMUSG00000026126.16"/>
</dbReference>
<dbReference type="GeneID" id="19253"/>
<dbReference type="KEGG" id="mmu:19253"/>
<dbReference type="UCSC" id="uc007aos.1">
    <property type="organism name" value="mouse"/>
</dbReference>
<dbReference type="AGR" id="MGI:108410"/>
<dbReference type="CTD" id="26469"/>
<dbReference type="MGI" id="MGI:108410">
    <property type="gene designation" value="Ptpn18"/>
</dbReference>
<dbReference type="VEuPathDB" id="HostDB:ENSMUSG00000026126"/>
<dbReference type="eggNOG" id="KOG0789">
    <property type="taxonomic scope" value="Eukaryota"/>
</dbReference>
<dbReference type="GeneTree" id="ENSGT00940000162860"/>
<dbReference type="HOGENOM" id="CLU_015557_0_0_1"/>
<dbReference type="InParanoid" id="Q61152"/>
<dbReference type="OMA" id="NMGDTYA"/>
<dbReference type="OrthoDB" id="8609993at2759"/>
<dbReference type="PhylomeDB" id="Q61152"/>
<dbReference type="TreeFam" id="TF351977"/>
<dbReference type="Reactome" id="R-MMU-8863795">
    <property type="pathway name" value="Downregulation of ERBB2 signaling"/>
</dbReference>
<dbReference type="BioGRID-ORCS" id="19253">
    <property type="hits" value="1 hit in 80 CRISPR screens"/>
</dbReference>
<dbReference type="ChiTaRS" id="Ptpn18">
    <property type="organism name" value="mouse"/>
</dbReference>
<dbReference type="PRO" id="PR:Q61152"/>
<dbReference type="Proteomes" id="UP000000589">
    <property type="component" value="Chromosome 1"/>
</dbReference>
<dbReference type="RNAct" id="Q61152">
    <property type="molecule type" value="protein"/>
</dbReference>
<dbReference type="Bgee" id="ENSMUSG00000026126">
    <property type="expression patterns" value="Expressed in granulocyte and 147 other cell types or tissues"/>
</dbReference>
<dbReference type="ExpressionAtlas" id="Q61152">
    <property type="expression patterns" value="baseline and differential"/>
</dbReference>
<dbReference type="GO" id="GO:0005737">
    <property type="term" value="C:cytoplasm"/>
    <property type="evidence" value="ECO:0000314"/>
    <property type="project" value="MGI"/>
</dbReference>
<dbReference type="GO" id="GO:0005634">
    <property type="term" value="C:nucleus"/>
    <property type="evidence" value="ECO:0000314"/>
    <property type="project" value="MGI"/>
</dbReference>
<dbReference type="GO" id="GO:0004726">
    <property type="term" value="F:non-membrane spanning protein tyrosine phosphatase activity"/>
    <property type="evidence" value="ECO:0000314"/>
    <property type="project" value="MGI"/>
</dbReference>
<dbReference type="GO" id="GO:0001825">
    <property type="term" value="P:blastocyst formation"/>
    <property type="evidence" value="ECO:0000315"/>
    <property type="project" value="MGI"/>
</dbReference>
<dbReference type="FunFam" id="3.90.190.10:FF:000045">
    <property type="entry name" value="Tyrosine-protein phosphatase non-receptor type 12"/>
    <property type="match status" value="1"/>
</dbReference>
<dbReference type="Gene3D" id="3.90.190.10">
    <property type="entry name" value="Protein tyrosine phosphatase superfamily"/>
    <property type="match status" value="1"/>
</dbReference>
<dbReference type="InterPro" id="IPR029021">
    <property type="entry name" value="Prot-tyrosine_phosphatase-like"/>
</dbReference>
<dbReference type="InterPro" id="IPR047170">
    <property type="entry name" value="PTN12/18/22"/>
</dbReference>
<dbReference type="InterPro" id="IPR000242">
    <property type="entry name" value="PTP_cat"/>
</dbReference>
<dbReference type="InterPro" id="IPR016130">
    <property type="entry name" value="Tyr_Pase_AS"/>
</dbReference>
<dbReference type="InterPro" id="IPR003595">
    <property type="entry name" value="Tyr_Pase_cat"/>
</dbReference>
<dbReference type="InterPro" id="IPR000387">
    <property type="entry name" value="Tyr_Pase_dom"/>
</dbReference>
<dbReference type="PANTHER" id="PTHR45983">
    <property type="entry name" value="TYROSINE PHOSPHATSE N18, PUTATIVE-RELATED"/>
    <property type="match status" value="1"/>
</dbReference>
<dbReference type="PANTHER" id="PTHR45983:SF4">
    <property type="entry name" value="TYROSINE-PROTEIN PHOSPHATASE NON-RECEPTOR TYPE 18"/>
    <property type="match status" value="1"/>
</dbReference>
<dbReference type="Pfam" id="PF00102">
    <property type="entry name" value="Y_phosphatase"/>
    <property type="match status" value="1"/>
</dbReference>
<dbReference type="PRINTS" id="PR00700">
    <property type="entry name" value="PRTYPHPHTASE"/>
</dbReference>
<dbReference type="SMART" id="SM00194">
    <property type="entry name" value="PTPc"/>
    <property type="match status" value="1"/>
</dbReference>
<dbReference type="SMART" id="SM00404">
    <property type="entry name" value="PTPc_motif"/>
    <property type="match status" value="1"/>
</dbReference>
<dbReference type="SUPFAM" id="SSF52799">
    <property type="entry name" value="(Phosphotyrosine protein) phosphatases II"/>
    <property type="match status" value="1"/>
</dbReference>
<dbReference type="PROSITE" id="PS00383">
    <property type="entry name" value="TYR_PHOSPHATASE_1"/>
    <property type="match status" value="1"/>
</dbReference>
<dbReference type="PROSITE" id="PS50056">
    <property type="entry name" value="TYR_PHOSPHATASE_2"/>
    <property type="match status" value="1"/>
</dbReference>
<dbReference type="PROSITE" id="PS50055">
    <property type="entry name" value="TYR_PHOSPHATASE_PTP"/>
    <property type="match status" value="1"/>
</dbReference>
<organism>
    <name type="scientific">Mus musculus</name>
    <name type="common">Mouse</name>
    <dbReference type="NCBI Taxonomy" id="10090"/>
    <lineage>
        <taxon>Eukaryota</taxon>
        <taxon>Metazoa</taxon>
        <taxon>Chordata</taxon>
        <taxon>Craniata</taxon>
        <taxon>Vertebrata</taxon>
        <taxon>Euteleostomi</taxon>
        <taxon>Mammalia</taxon>
        <taxon>Eutheria</taxon>
        <taxon>Euarchontoglires</taxon>
        <taxon>Glires</taxon>
        <taxon>Rodentia</taxon>
        <taxon>Myomorpha</taxon>
        <taxon>Muroidea</taxon>
        <taxon>Muridae</taxon>
        <taxon>Murinae</taxon>
        <taxon>Mus</taxon>
        <taxon>Mus</taxon>
    </lineage>
</organism>
<accession>Q61152</accession>
<accession>Q4JFH4</accession>
<accession>Q62404</accession>
<accession>Q922E3</accession>
<protein>
    <recommendedName>
        <fullName>Tyrosine-protein phosphatase non-receptor type 18</fullName>
        <ecNumber>3.1.3.48</ecNumber>
    </recommendedName>
    <alternativeName>
        <fullName>Fetal liver phosphatase 1</fullName>
        <shortName>FLP-1</shortName>
    </alternativeName>
    <alternativeName>
        <fullName>PTP-K1</fullName>
    </alternativeName>
</protein>
<name>PTN18_MOUSE</name>
<feature type="chain" id="PRO_0000094774" description="Tyrosine-protein phosphatase non-receptor type 18">
    <location>
        <begin position="1"/>
        <end position="453"/>
    </location>
</feature>
<feature type="domain" description="Tyrosine-protein phosphatase" evidence="2">
    <location>
        <begin position="26"/>
        <end position="291"/>
    </location>
</feature>
<feature type="region of interest" description="Disordered" evidence="4">
    <location>
        <begin position="384"/>
        <end position="453"/>
    </location>
</feature>
<feature type="compositionally biased region" description="Basic and acidic residues" evidence="4">
    <location>
        <begin position="442"/>
        <end position="453"/>
    </location>
</feature>
<feature type="active site" description="Phosphocysteine intermediate" evidence="2 3">
    <location>
        <position position="229"/>
    </location>
</feature>
<feature type="binding site" evidence="1">
    <location>
        <position position="197"/>
    </location>
    <ligand>
        <name>substrate</name>
    </ligand>
</feature>
<feature type="binding site" evidence="1">
    <location>
        <begin position="229"/>
        <end position="235"/>
    </location>
    <ligand>
        <name>substrate</name>
    </ligand>
</feature>
<feature type="binding site" evidence="1">
    <location>
        <position position="276"/>
    </location>
    <ligand>
        <name>substrate</name>
    </ligand>
</feature>
<feature type="modified residue" description="Phosphotyrosine" evidence="10 11">
    <location>
        <position position="381"/>
    </location>
</feature>
<feature type="modified residue" description="Phosphotyrosine" evidence="10">
    <location>
        <position position="419"/>
    </location>
</feature>
<feature type="sequence conflict" description="In Ref. 3; AAC52991." evidence="9" ref="3">
    <original>F</original>
    <variation>L</variation>
    <location>
        <position position="11"/>
    </location>
</feature>
<feature type="sequence conflict" description="In Ref. 5; AAH08512." evidence="9" ref="5">
    <original>T</original>
    <variation>M</variation>
    <location>
        <position position="57"/>
    </location>
</feature>
<feature type="sequence conflict" description="In Ref. 5; AAH08512." evidence="9" ref="5">
    <original>I</original>
    <variation>T</variation>
    <location>
        <position position="95"/>
    </location>
</feature>
<feature type="sequence conflict" description="In Ref. 5; AAH08512." evidence="9" ref="5">
    <original>F</original>
    <variation>S</variation>
    <location>
        <position position="184"/>
    </location>
</feature>
<feature type="sequence conflict" description="In Ref. 3; AAC52991." evidence="9" ref="3">
    <original>ASAGTGP</original>
    <variation>LRRHRA</variation>
    <location>
        <begin position="362"/>
        <end position="368"/>
    </location>
</feature>
<feature type="sequence conflict" description="In Ref. 5; AAH08512." evidence="9" ref="5">
    <original>G</original>
    <variation>V</variation>
    <location>
        <position position="365"/>
    </location>
</feature>
<feature type="sequence conflict" description="In Ref. 5; AAH08512." evidence="9" ref="5">
    <original>T</original>
    <variation>N</variation>
    <location>
        <position position="374"/>
    </location>
</feature>
<feature type="sequence conflict" description="In Ref. 5; AAH08512." evidence="9" ref="5">
    <original>T</original>
    <variation>I</variation>
    <location>
        <position position="401"/>
    </location>
</feature>
<sequence>MSRHTDLVRSFLEQLEARDYREGAILAREFSDIKARSVAWKSEGVCSTKAGSRLGNTNKNRYKDVVAYDETRVILSLLQEEGHGDYINANFIRGIDGSQAYIATQGPLPHTLLDFWRLVWEFGVKVILMACQETENGRRKCERYWAREQEPLKAGPFCITLTKETTLNADITLRTLQVTFQKEFRSVHQLQYMSWPDHGVPSSSDHILTMVEEARCLQGLGPGPLCVHCSAGCGRTGVLCAVDYVRQLLLTQTIPPNFSLFQVVLEMRKQRPAAVQTEEQYRFLYHTVAQLFSRTLQDTSPHYQNLKENCAPICKEAFSLRTSSALPATSRPPGGVLRSISVPAPPTLPMADTYAVVQKRGASAGTGPGPRAPTSTDTPIYSQVAPRAQRPVAHTEDAQGTTALRRVPADQNSSGPDAYEEVTDGAQTGGLGFNLRIGRPKGPRDPPAEWTRV</sequence>
<evidence type="ECO:0000250" key="1"/>
<evidence type="ECO:0000255" key="2">
    <source>
        <dbReference type="PROSITE-ProRule" id="PRU00160"/>
    </source>
</evidence>
<evidence type="ECO:0000255" key="3">
    <source>
        <dbReference type="PROSITE-ProRule" id="PRU10044"/>
    </source>
</evidence>
<evidence type="ECO:0000256" key="4">
    <source>
        <dbReference type="SAM" id="MobiDB-lite"/>
    </source>
</evidence>
<evidence type="ECO:0000269" key="5">
    <source>
    </source>
</evidence>
<evidence type="ECO:0000269" key="6">
    <source>
    </source>
</evidence>
<evidence type="ECO:0000269" key="7">
    <source>
    </source>
</evidence>
<evidence type="ECO:0000269" key="8">
    <source>
    </source>
</evidence>
<evidence type="ECO:0000305" key="9"/>
<evidence type="ECO:0007744" key="10">
    <source>
    </source>
</evidence>
<evidence type="ECO:0007744" key="11">
    <source>
    </source>
</evidence>
<comment type="function">
    <text>May be involved in growth and differentiation of hematopoietic cells.</text>
</comment>
<comment type="catalytic activity">
    <reaction evidence="3">
        <text>O-phospho-L-tyrosyl-[protein] + H2O = L-tyrosyl-[protein] + phosphate</text>
        <dbReference type="Rhea" id="RHEA:10684"/>
        <dbReference type="Rhea" id="RHEA-COMP:10136"/>
        <dbReference type="Rhea" id="RHEA-COMP:20101"/>
        <dbReference type="ChEBI" id="CHEBI:15377"/>
        <dbReference type="ChEBI" id="CHEBI:43474"/>
        <dbReference type="ChEBI" id="CHEBI:46858"/>
        <dbReference type="ChEBI" id="CHEBI:61978"/>
        <dbReference type="EC" id="3.1.3.48"/>
    </reaction>
</comment>
<comment type="subunit">
    <text evidence="8">Interacts with PSTPIP1.</text>
</comment>
<comment type="interaction">
    <interactant intactId="EBI-7074223">
        <id>Q61152</id>
    </interactant>
    <interactant intactId="EBI-7484574">
        <id>P97814</id>
        <label>Pstpip1</label>
    </interactant>
    <organismsDiffer>false</organismsDiffer>
    <experiments>3</experiments>
</comment>
<comment type="interaction">
    <interactant intactId="EBI-7074223">
        <id>Q61152</id>
    </interactant>
    <interactant intactId="EBI-8653964">
        <id>Q99M15</id>
        <label>Pstpip2</label>
    </interactant>
    <organismsDiffer>false</organismsDiffer>
    <experiments>7</experiments>
</comment>
<comment type="subcellular location">
    <subcellularLocation>
        <location evidence="7">Nucleus</location>
    </subcellularLocation>
    <subcellularLocation>
        <location evidence="7">Cytoplasm</location>
    </subcellularLocation>
</comment>
<comment type="tissue specificity">
    <text evidence="5 6 7">Highest expression in bone marrow. Also expressed in kidney, lung, ovary, spleen, thymus and lymph node.</text>
</comment>
<comment type="developmental stage">
    <text>Expressed in the embryo from day 15.5.</text>
</comment>
<comment type="similarity">
    <text evidence="9">Belongs to the protein-tyrosine phosphatase family. Non-receptor class 4 subfamily.</text>
</comment>